<proteinExistence type="inferred from homology"/>
<gene>
    <name evidence="1" type="primary">atpE</name>
    <name type="ordered locus">WD_0428</name>
</gene>
<keyword id="KW-0066">ATP synthesis</keyword>
<keyword id="KW-1003">Cell membrane</keyword>
<keyword id="KW-0138">CF(0)</keyword>
<keyword id="KW-0375">Hydrogen ion transport</keyword>
<keyword id="KW-0406">Ion transport</keyword>
<keyword id="KW-0446">Lipid-binding</keyword>
<keyword id="KW-0472">Membrane</keyword>
<keyword id="KW-0812">Transmembrane</keyword>
<keyword id="KW-1133">Transmembrane helix</keyword>
<keyword id="KW-0813">Transport</keyword>
<feature type="chain" id="PRO_1000184534" description="ATP synthase subunit c">
    <location>
        <begin position="1"/>
        <end position="75"/>
    </location>
</feature>
<feature type="transmembrane region" description="Helical" evidence="1">
    <location>
        <begin position="8"/>
        <end position="28"/>
    </location>
</feature>
<feature type="transmembrane region" description="Helical" evidence="1">
    <location>
        <begin position="52"/>
        <end position="72"/>
    </location>
</feature>
<feature type="site" description="Reversibly protonated during proton transport" evidence="1">
    <location>
        <position position="58"/>
    </location>
</feature>
<name>ATPL_WOLPM</name>
<protein>
    <recommendedName>
        <fullName evidence="1">ATP synthase subunit c</fullName>
    </recommendedName>
    <alternativeName>
        <fullName evidence="1">ATP synthase F(0) sector subunit c</fullName>
    </alternativeName>
    <alternativeName>
        <fullName evidence="1">F-type ATPase subunit c</fullName>
        <shortName evidence="1">F-ATPase subunit c</shortName>
    </alternativeName>
    <alternativeName>
        <fullName evidence="1">Lipid-binding protein</fullName>
    </alternativeName>
</protein>
<comment type="function">
    <text evidence="1">F(1)F(0) ATP synthase produces ATP from ADP in the presence of a proton or sodium gradient. F-type ATPases consist of two structural domains, F(1) containing the extramembraneous catalytic core and F(0) containing the membrane proton channel, linked together by a central stalk and a peripheral stalk. During catalysis, ATP synthesis in the catalytic domain of F(1) is coupled via a rotary mechanism of the central stalk subunits to proton translocation.</text>
</comment>
<comment type="function">
    <text evidence="1">Key component of the F(0) channel; it plays a direct role in translocation across the membrane. A homomeric c-ring of between 10-14 subunits forms the central stalk rotor element with the F(1) delta and epsilon subunits.</text>
</comment>
<comment type="subunit">
    <text evidence="1">F-type ATPases have 2 components, F(1) - the catalytic core - and F(0) - the membrane proton channel. F(1) has five subunits: alpha(3), beta(3), gamma(1), delta(1), epsilon(1). F(0) has three main subunits: a(1), b(2) and c(10-14). The alpha and beta chains form an alternating ring which encloses part of the gamma chain. F(1) is attached to F(0) by a central stalk formed by the gamma and epsilon chains, while a peripheral stalk is formed by the delta and b chains.</text>
</comment>
<comment type="subcellular location">
    <subcellularLocation>
        <location evidence="1">Cell membrane</location>
        <topology evidence="1">Multi-pass membrane protein</topology>
    </subcellularLocation>
</comment>
<comment type="similarity">
    <text evidence="1">Belongs to the ATPase C chain family.</text>
</comment>
<organism>
    <name type="scientific">Wolbachia pipientis wMel</name>
    <dbReference type="NCBI Taxonomy" id="163164"/>
    <lineage>
        <taxon>Bacteria</taxon>
        <taxon>Pseudomonadati</taxon>
        <taxon>Pseudomonadota</taxon>
        <taxon>Alphaproteobacteria</taxon>
        <taxon>Rickettsiales</taxon>
        <taxon>Anaplasmataceae</taxon>
        <taxon>Wolbachieae</taxon>
        <taxon>Wolbachia</taxon>
    </lineage>
</organism>
<reference key="1">
    <citation type="journal article" date="2004" name="PLoS Biol.">
        <title>Phylogenomics of the reproductive parasite Wolbachia pipientis wMel: a streamlined genome overrun by mobile genetic elements.</title>
        <authorList>
            <person name="Wu M."/>
            <person name="Sun L.V."/>
            <person name="Vamathevan J.J."/>
            <person name="Riegler M."/>
            <person name="DeBoy R.T."/>
            <person name="Brownlie J.C."/>
            <person name="McGraw E.A."/>
            <person name="Martin W."/>
            <person name="Esser C."/>
            <person name="Ahmadinejad N."/>
            <person name="Wiegand C."/>
            <person name="Madupu R."/>
            <person name="Beanan M.J."/>
            <person name="Brinkac L.M."/>
            <person name="Daugherty S.C."/>
            <person name="Durkin A.S."/>
            <person name="Kolonay J.F."/>
            <person name="Nelson W.C."/>
            <person name="Mohamoud Y."/>
            <person name="Lee P."/>
            <person name="Berry K.J."/>
            <person name="Young M.B."/>
            <person name="Utterback T.R."/>
            <person name="Weidman J.F."/>
            <person name="Nierman W.C."/>
            <person name="Paulsen I.T."/>
            <person name="Nelson K.E."/>
            <person name="Tettelin H."/>
            <person name="O'Neill S.L."/>
            <person name="Eisen J.A."/>
        </authorList>
    </citation>
    <scope>NUCLEOTIDE SEQUENCE [LARGE SCALE GENOMIC DNA]</scope>
</reference>
<evidence type="ECO:0000255" key="1">
    <source>
        <dbReference type="HAMAP-Rule" id="MF_01396"/>
    </source>
</evidence>
<sequence>MDLVALKFIAIGLAVFGMLGAGLGIANIFSAMLNGIARNPESEGKMKSYVYIGAAMVEIMGLLAFVLAMLLIFAA</sequence>
<accession>Q73HW2</accession>
<dbReference type="EMBL" id="AE017196">
    <property type="protein sequence ID" value="AAS14151.1"/>
    <property type="molecule type" value="Genomic_DNA"/>
</dbReference>
<dbReference type="RefSeq" id="WP_006014985.1">
    <property type="nucleotide sequence ID" value="NZ_OX384529.1"/>
</dbReference>
<dbReference type="SMR" id="Q73HW2"/>
<dbReference type="EnsemblBacteria" id="AAS14151">
    <property type="protein sequence ID" value="AAS14151"/>
    <property type="gene ID" value="WD_0428"/>
</dbReference>
<dbReference type="KEGG" id="wol:WD_0428"/>
<dbReference type="eggNOG" id="COG0636">
    <property type="taxonomic scope" value="Bacteria"/>
</dbReference>
<dbReference type="Proteomes" id="UP000008215">
    <property type="component" value="Chromosome"/>
</dbReference>
<dbReference type="GO" id="GO:0005886">
    <property type="term" value="C:plasma membrane"/>
    <property type="evidence" value="ECO:0007669"/>
    <property type="project" value="UniProtKB-SubCell"/>
</dbReference>
<dbReference type="GO" id="GO:0045259">
    <property type="term" value="C:proton-transporting ATP synthase complex"/>
    <property type="evidence" value="ECO:0007669"/>
    <property type="project" value="UniProtKB-KW"/>
</dbReference>
<dbReference type="GO" id="GO:0033177">
    <property type="term" value="C:proton-transporting two-sector ATPase complex, proton-transporting domain"/>
    <property type="evidence" value="ECO:0007669"/>
    <property type="project" value="InterPro"/>
</dbReference>
<dbReference type="GO" id="GO:0008289">
    <property type="term" value="F:lipid binding"/>
    <property type="evidence" value="ECO:0007669"/>
    <property type="project" value="UniProtKB-KW"/>
</dbReference>
<dbReference type="GO" id="GO:0046933">
    <property type="term" value="F:proton-transporting ATP synthase activity, rotational mechanism"/>
    <property type="evidence" value="ECO:0007669"/>
    <property type="project" value="UniProtKB-UniRule"/>
</dbReference>
<dbReference type="CDD" id="cd18182">
    <property type="entry name" value="ATP-synt_Fo_c_ATP5G3"/>
    <property type="match status" value="1"/>
</dbReference>
<dbReference type="Gene3D" id="1.20.20.10">
    <property type="entry name" value="F1F0 ATP synthase subunit C"/>
    <property type="match status" value="1"/>
</dbReference>
<dbReference type="HAMAP" id="MF_01396">
    <property type="entry name" value="ATP_synth_c_bact"/>
    <property type="match status" value="1"/>
</dbReference>
<dbReference type="InterPro" id="IPR005953">
    <property type="entry name" value="ATP_synth_csu_bac/chlpt"/>
</dbReference>
<dbReference type="InterPro" id="IPR000454">
    <property type="entry name" value="ATP_synth_F0_csu"/>
</dbReference>
<dbReference type="InterPro" id="IPR020537">
    <property type="entry name" value="ATP_synth_F0_csu_DDCD_BS"/>
</dbReference>
<dbReference type="InterPro" id="IPR038662">
    <property type="entry name" value="ATP_synth_F0_csu_sf"/>
</dbReference>
<dbReference type="InterPro" id="IPR002379">
    <property type="entry name" value="ATPase_proteolipid_c-like_dom"/>
</dbReference>
<dbReference type="InterPro" id="IPR035921">
    <property type="entry name" value="F/V-ATP_Csub_sf"/>
</dbReference>
<dbReference type="NCBIfam" id="TIGR01260">
    <property type="entry name" value="ATP_synt_c"/>
    <property type="match status" value="1"/>
</dbReference>
<dbReference type="NCBIfam" id="NF005733">
    <property type="entry name" value="PRK07558.1"/>
    <property type="match status" value="1"/>
</dbReference>
<dbReference type="PANTHER" id="PTHR10031">
    <property type="entry name" value="ATP SYNTHASE LIPID-BINDING PROTEIN, MITOCHONDRIAL"/>
    <property type="match status" value="1"/>
</dbReference>
<dbReference type="PANTHER" id="PTHR10031:SF0">
    <property type="entry name" value="ATPASE PROTEIN 9"/>
    <property type="match status" value="1"/>
</dbReference>
<dbReference type="Pfam" id="PF00137">
    <property type="entry name" value="ATP-synt_C"/>
    <property type="match status" value="1"/>
</dbReference>
<dbReference type="PRINTS" id="PR00124">
    <property type="entry name" value="ATPASEC"/>
</dbReference>
<dbReference type="SUPFAM" id="SSF81333">
    <property type="entry name" value="F1F0 ATP synthase subunit C"/>
    <property type="match status" value="1"/>
</dbReference>
<dbReference type="PROSITE" id="PS00605">
    <property type="entry name" value="ATPASE_C"/>
    <property type="match status" value="1"/>
</dbReference>